<evidence type="ECO:0000255" key="1">
    <source>
        <dbReference type="HAMAP-Rule" id="MF_00121"/>
    </source>
</evidence>
<proteinExistence type="inferred from homology"/>
<name>GATB_ALCBS</name>
<dbReference type="EC" id="6.3.5.-" evidence="1"/>
<dbReference type="EMBL" id="AM286690">
    <property type="protein sequence ID" value="CAL15975.1"/>
    <property type="molecule type" value="Genomic_DNA"/>
</dbReference>
<dbReference type="RefSeq" id="WP_011587813.1">
    <property type="nucleotide sequence ID" value="NC_008260.1"/>
</dbReference>
<dbReference type="SMR" id="Q0VS73"/>
<dbReference type="STRING" id="393595.ABO_0527"/>
<dbReference type="KEGG" id="abo:ABO_0527"/>
<dbReference type="eggNOG" id="COG0064">
    <property type="taxonomic scope" value="Bacteria"/>
</dbReference>
<dbReference type="HOGENOM" id="CLU_019240_0_0_6"/>
<dbReference type="OrthoDB" id="9804078at2"/>
<dbReference type="Proteomes" id="UP000008871">
    <property type="component" value="Chromosome"/>
</dbReference>
<dbReference type="GO" id="GO:0050566">
    <property type="term" value="F:asparaginyl-tRNA synthase (glutamine-hydrolyzing) activity"/>
    <property type="evidence" value="ECO:0007669"/>
    <property type="project" value="RHEA"/>
</dbReference>
<dbReference type="GO" id="GO:0005524">
    <property type="term" value="F:ATP binding"/>
    <property type="evidence" value="ECO:0007669"/>
    <property type="project" value="UniProtKB-KW"/>
</dbReference>
<dbReference type="GO" id="GO:0050567">
    <property type="term" value="F:glutaminyl-tRNA synthase (glutamine-hydrolyzing) activity"/>
    <property type="evidence" value="ECO:0007669"/>
    <property type="project" value="UniProtKB-UniRule"/>
</dbReference>
<dbReference type="GO" id="GO:0070681">
    <property type="term" value="P:glutaminyl-tRNAGln biosynthesis via transamidation"/>
    <property type="evidence" value="ECO:0007669"/>
    <property type="project" value="TreeGrafter"/>
</dbReference>
<dbReference type="GO" id="GO:0006412">
    <property type="term" value="P:translation"/>
    <property type="evidence" value="ECO:0007669"/>
    <property type="project" value="UniProtKB-UniRule"/>
</dbReference>
<dbReference type="FunFam" id="1.10.10.410:FF:000001">
    <property type="entry name" value="Aspartyl/glutamyl-tRNA(Asn/Gln) amidotransferase subunit B"/>
    <property type="match status" value="1"/>
</dbReference>
<dbReference type="FunFam" id="1.10.150.380:FF:000001">
    <property type="entry name" value="Aspartyl/glutamyl-tRNA(Asn/Gln) amidotransferase subunit B"/>
    <property type="match status" value="1"/>
</dbReference>
<dbReference type="Gene3D" id="1.10.10.410">
    <property type="match status" value="1"/>
</dbReference>
<dbReference type="Gene3D" id="1.10.150.380">
    <property type="entry name" value="GatB domain, N-terminal subdomain"/>
    <property type="match status" value="1"/>
</dbReference>
<dbReference type="HAMAP" id="MF_00121">
    <property type="entry name" value="GatB"/>
    <property type="match status" value="1"/>
</dbReference>
<dbReference type="InterPro" id="IPR017959">
    <property type="entry name" value="Asn/Gln-tRNA_amidoTrfase_suB/E"/>
</dbReference>
<dbReference type="InterPro" id="IPR006075">
    <property type="entry name" value="Asn/Gln-tRNA_Trfase_suB/E_cat"/>
</dbReference>
<dbReference type="InterPro" id="IPR018027">
    <property type="entry name" value="Asn/Gln_amidotransferase"/>
</dbReference>
<dbReference type="InterPro" id="IPR003789">
    <property type="entry name" value="Asn/Gln_tRNA_amidoTrase-B-like"/>
</dbReference>
<dbReference type="InterPro" id="IPR004413">
    <property type="entry name" value="GatB"/>
</dbReference>
<dbReference type="InterPro" id="IPR042114">
    <property type="entry name" value="GatB_C_1"/>
</dbReference>
<dbReference type="InterPro" id="IPR023168">
    <property type="entry name" value="GatB_Yqey_C_2"/>
</dbReference>
<dbReference type="InterPro" id="IPR017958">
    <property type="entry name" value="Gln-tRNA_amidoTrfase_suB_CS"/>
</dbReference>
<dbReference type="InterPro" id="IPR014746">
    <property type="entry name" value="Gln_synth/guanido_kin_cat_dom"/>
</dbReference>
<dbReference type="NCBIfam" id="TIGR00133">
    <property type="entry name" value="gatB"/>
    <property type="match status" value="1"/>
</dbReference>
<dbReference type="NCBIfam" id="NF004012">
    <property type="entry name" value="PRK05477.1-2"/>
    <property type="match status" value="1"/>
</dbReference>
<dbReference type="NCBIfam" id="NF004014">
    <property type="entry name" value="PRK05477.1-4"/>
    <property type="match status" value="1"/>
</dbReference>
<dbReference type="NCBIfam" id="NF004015">
    <property type="entry name" value="PRK05477.1-5"/>
    <property type="match status" value="1"/>
</dbReference>
<dbReference type="PANTHER" id="PTHR11659">
    <property type="entry name" value="GLUTAMYL-TRNA GLN AMIDOTRANSFERASE SUBUNIT B MITOCHONDRIAL AND PROKARYOTIC PET112-RELATED"/>
    <property type="match status" value="1"/>
</dbReference>
<dbReference type="PANTHER" id="PTHR11659:SF0">
    <property type="entry name" value="GLUTAMYL-TRNA(GLN) AMIDOTRANSFERASE SUBUNIT B, MITOCHONDRIAL"/>
    <property type="match status" value="1"/>
</dbReference>
<dbReference type="Pfam" id="PF02934">
    <property type="entry name" value="GatB_N"/>
    <property type="match status" value="1"/>
</dbReference>
<dbReference type="Pfam" id="PF02637">
    <property type="entry name" value="GatB_Yqey"/>
    <property type="match status" value="1"/>
</dbReference>
<dbReference type="SMART" id="SM00845">
    <property type="entry name" value="GatB_Yqey"/>
    <property type="match status" value="1"/>
</dbReference>
<dbReference type="SUPFAM" id="SSF89095">
    <property type="entry name" value="GatB/YqeY motif"/>
    <property type="match status" value="1"/>
</dbReference>
<dbReference type="SUPFAM" id="SSF55931">
    <property type="entry name" value="Glutamine synthetase/guanido kinase"/>
    <property type="match status" value="1"/>
</dbReference>
<dbReference type="PROSITE" id="PS01234">
    <property type="entry name" value="GATB"/>
    <property type="match status" value="1"/>
</dbReference>
<keyword id="KW-0067">ATP-binding</keyword>
<keyword id="KW-0436">Ligase</keyword>
<keyword id="KW-0547">Nucleotide-binding</keyword>
<keyword id="KW-0648">Protein biosynthesis</keyword>
<keyword id="KW-1185">Reference proteome</keyword>
<feature type="chain" id="PRO_1000015928" description="Aspartyl/glutamyl-tRNA(Asn/Gln) amidotransferase subunit B">
    <location>
        <begin position="1"/>
        <end position="479"/>
    </location>
</feature>
<protein>
    <recommendedName>
        <fullName evidence="1">Aspartyl/glutamyl-tRNA(Asn/Gln) amidotransferase subunit B</fullName>
        <shortName evidence="1">Asp/Glu-ADT subunit B</shortName>
        <ecNumber evidence="1">6.3.5.-</ecNumber>
    </recommendedName>
</protein>
<sequence length="479" mass="52295">MSWEIVIGLEVHVQLNTASKLFSGSKLSTGAEPNTQASLVDLGLPGTLPVVNREAVRKAALFGLAIDADICRHSVFERKNYFYPDLPKGYQTTQLAEPIVGAGTVEIQLDNGEKKSIRIHHAHLEEDAGKSLHEDFHGMTGIDLNRAGTPLIEIVSEPDMANAEEAVAFARKLHAIVTSIGICDGDMSQGNMRFDVNISVRKPGEPLGTRTETKNLNSFRFMEKAIALEVERQIDVLEDGGEIVQETRLYNGDTHTARSMRSKEDANDYRYFPCPDLLPVAITDADIEELKAAMPELPDSRKARFTNDYQLSEYDADLLSGSIATAAFFEAAAKSGGDAKLAANWVMGELAAKLNAEEKSITDSPVSAEQLGQLIARLKDGTISSKIAKQVFEACWAGEGNPDEIIEAKGLKQMSDTGELEKIVDDIIANNAAQADDYRNSDDAKKKKKIGFFVGQAMKATQGKANPQQLNKLLQEKLQ</sequence>
<organism>
    <name type="scientific">Alcanivorax borkumensis (strain ATCC 700651 / DSM 11573 / NCIMB 13689 / SK2)</name>
    <dbReference type="NCBI Taxonomy" id="393595"/>
    <lineage>
        <taxon>Bacteria</taxon>
        <taxon>Pseudomonadati</taxon>
        <taxon>Pseudomonadota</taxon>
        <taxon>Gammaproteobacteria</taxon>
        <taxon>Oceanospirillales</taxon>
        <taxon>Alcanivoracaceae</taxon>
        <taxon>Alcanivorax</taxon>
    </lineage>
</organism>
<gene>
    <name evidence="1" type="primary">gatB</name>
    <name type="ordered locus">ABO_0527</name>
</gene>
<accession>Q0VS73</accession>
<comment type="function">
    <text evidence="1">Allows the formation of correctly charged Asn-tRNA(Asn) or Gln-tRNA(Gln) through the transamidation of misacylated Asp-tRNA(Asn) or Glu-tRNA(Gln) in organisms which lack either or both of asparaginyl-tRNA or glutaminyl-tRNA synthetases. The reaction takes place in the presence of glutamine and ATP through an activated phospho-Asp-tRNA(Asn) or phospho-Glu-tRNA(Gln).</text>
</comment>
<comment type="catalytic activity">
    <reaction evidence="1">
        <text>L-glutamyl-tRNA(Gln) + L-glutamine + ATP + H2O = L-glutaminyl-tRNA(Gln) + L-glutamate + ADP + phosphate + H(+)</text>
        <dbReference type="Rhea" id="RHEA:17521"/>
        <dbReference type="Rhea" id="RHEA-COMP:9681"/>
        <dbReference type="Rhea" id="RHEA-COMP:9684"/>
        <dbReference type="ChEBI" id="CHEBI:15377"/>
        <dbReference type="ChEBI" id="CHEBI:15378"/>
        <dbReference type="ChEBI" id="CHEBI:29985"/>
        <dbReference type="ChEBI" id="CHEBI:30616"/>
        <dbReference type="ChEBI" id="CHEBI:43474"/>
        <dbReference type="ChEBI" id="CHEBI:58359"/>
        <dbReference type="ChEBI" id="CHEBI:78520"/>
        <dbReference type="ChEBI" id="CHEBI:78521"/>
        <dbReference type="ChEBI" id="CHEBI:456216"/>
    </reaction>
</comment>
<comment type="catalytic activity">
    <reaction evidence="1">
        <text>L-aspartyl-tRNA(Asn) + L-glutamine + ATP + H2O = L-asparaginyl-tRNA(Asn) + L-glutamate + ADP + phosphate + 2 H(+)</text>
        <dbReference type="Rhea" id="RHEA:14513"/>
        <dbReference type="Rhea" id="RHEA-COMP:9674"/>
        <dbReference type="Rhea" id="RHEA-COMP:9677"/>
        <dbReference type="ChEBI" id="CHEBI:15377"/>
        <dbReference type="ChEBI" id="CHEBI:15378"/>
        <dbReference type="ChEBI" id="CHEBI:29985"/>
        <dbReference type="ChEBI" id="CHEBI:30616"/>
        <dbReference type="ChEBI" id="CHEBI:43474"/>
        <dbReference type="ChEBI" id="CHEBI:58359"/>
        <dbReference type="ChEBI" id="CHEBI:78515"/>
        <dbReference type="ChEBI" id="CHEBI:78516"/>
        <dbReference type="ChEBI" id="CHEBI:456216"/>
    </reaction>
</comment>
<comment type="subunit">
    <text evidence="1">Heterotrimer of A, B and C subunits.</text>
</comment>
<comment type="similarity">
    <text evidence="1">Belongs to the GatB/GatE family. GatB subfamily.</text>
</comment>
<reference key="1">
    <citation type="journal article" date="2006" name="Nat. Biotechnol.">
        <title>Genome sequence of the ubiquitous hydrocarbon-degrading marine bacterium Alcanivorax borkumensis.</title>
        <authorList>
            <person name="Schneiker S."/>
            <person name="Martins dos Santos V.A.P."/>
            <person name="Bartels D."/>
            <person name="Bekel T."/>
            <person name="Brecht M."/>
            <person name="Buhrmester J."/>
            <person name="Chernikova T.N."/>
            <person name="Denaro R."/>
            <person name="Ferrer M."/>
            <person name="Gertler C."/>
            <person name="Goesmann A."/>
            <person name="Golyshina O.V."/>
            <person name="Kaminski F."/>
            <person name="Khachane A.N."/>
            <person name="Lang S."/>
            <person name="Linke B."/>
            <person name="McHardy A.C."/>
            <person name="Meyer F."/>
            <person name="Nechitaylo T."/>
            <person name="Puehler A."/>
            <person name="Regenhardt D."/>
            <person name="Rupp O."/>
            <person name="Sabirova J.S."/>
            <person name="Selbitschka W."/>
            <person name="Yakimov M.M."/>
            <person name="Timmis K.N."/>
            <person name="Vorhoelter F.-J."/>
            <person name="Weidner S."/>
            <person name="Kaiser O."/>
            <person name="Golyshin P.N."/>
        </authorList>
    </citation>
    <scope>NUCLEOTIDE SEQUENCE [LARGE SCALE GENOMIC DNA]</scope>
    <source>
        <strain>ATCC 700651 / DSM 11573 / NCIMB 13689 / SK2</strain>
    </source>
</reference>